<sequence length="130" mass="15030">MKRRTARERAMQALYQMDITGELEPKVAVENTLDEGEETNEFLESLVVGFVDNKEEIDAAIRQNLKKWKLERISIVDRSILRVAVCEMKYMEEIPHNVTINEAIEIAKTFGDEESRRFINGVLSNIKDTL</sequence>
<comment type="function">
    <text evidence="1">Involved in transcription antitermination. Required for transcription of ribosomal RNA (rRNA) genes. Binds specifically to the boxA antiterminator sequence of the ribosomal RNA (rrn) operons.</text>
</comment>
<comment type="similarity">
    <text evidence="1">Belongs to the NusB family.</text>
</comment>
<evidence type="ECO:0000255" key="1">
    <source>
        <dbReference type="HAMAP-Rule" id="MF_00073"/>
    </source>
</evidence>
<proteinExistence type="inferred from homology"/>
<keyword id="KW-0694">RNA-binding</keyword>
<keyword id="KW-0804">Transcription</keyword>
<keyword id="KW-0889">Transcription antitermination</keyword>
<keyword id="KW-0805">Transcription regulation</keyword>
<protein>
    <recommendedName>
        <fullName evidence="1">Transcription antitermination protein NusB</fullName>
    </recommendedName>
    <alternativeName>
        <fullName evidence="1">Antitermination factor NusB</fullName>
    </alternativeName>
</protein>
<gene>
    <name evidence="1" type="primary">nusB</name>
    <name type="ordered locus">BcerKBAB4_4034</name>
</gene>
<dbReference type="EMBL" id="CP000903">
    <property type="protein sequence ID" value="ABY45196.1"/>
    <property type="molecule type" value="Genomic_DNA"/>
</dbReference>
<dbReference type="RefSeq" id="WP_002067080.1">
    <property type="nucleotide sequence ID" value="NZ_CAKMRX030000166.1"/>
</dbReference>
<dbReference type="SMR" id="A9VGW4"/>
<dbReference type="GeneID" id="66266241"/>
<dbReference type="KEGG" id="bwe:BcerKBAB4_4034"/>
<dbReference type="eggNOG" id="COG0781">
    <property type="taxonomic scope" value="Bacteria"/>
</dbReference>
<dbReference type="HOGENOM" id="CLU_087843_3_3_9"/>
<dbReference type="Proteomes" id="UP000002154">
    <property type="component" value="Chromosome"/>
</dbReference>
<dbReference type="GO" id="GO:0005829">
    <property type="term" value="C:cytosol"/>
    <property type="evidence" value="ECO:0007669"/>
    <property type="project" value="TreeGrafter"/>
</dbReference>
<dbReference type="GO" id="GO:0003723">
    <property type="term" value="F:RNA binding"/>
    <property type="evidence" value="ECO:0007669"/>
    <property type="project" value="UniProtKB-UniRule"/>
</dbReference>
<dbReference type="GO" id="GO:0006353">
    <property type="term" value="P:DNA-templated transcription termination"/>
    <property type="evidence" value="ECO:0007669"/>
    <property type="project" value="UniProtKB-UniRule"/>
</dbReference>
<dbReference type="GO" id="GO:0031564">
    <property type="term" value="P:transcription antitermination"/>
    <property type="evidence" value="ECO:0007669"/>
    <property type="project" value="UniProtKB-KW"/>
</dbReference>
<dbReference type="CDD" id="cd00619">
    <property type="entry name" value="Terminator_NusB"/>
    <property type="match status" value="1"/>
</dbReference>
<dbReference type="FunFam" id="1.10.940.10:FF:000003">
    <property type="entry name" value="Transcription antitermination factor NusB"/>
    <property type="match status" value="1"/>
</dbReference>
<dbReference type="Gene3D" id="1.10.940.10">
    <property type="entry name" value="NusB-like"/>
    <property type="match status" value="1"/>
</dbReference>
<dbReference type="HAMAP" id="MF_00073">
    <property type="entry name" value="NusB"/>
    <property type="match status" value="1"/>
</dbReference>
<dbReference type="InterPro" id="IPR035926">
    <property type="entry name" value="NusB-like_sf"/>
</dbReference>
<dbReference type="InterPro" id="IPR011605">
    <property type="entry name" value="NusB_fam"/>
</dbReference>
<dbReference type="InterPro" id="IPR006027">
    <property type="entry name" value="NusB_RsmB_TIM44"/>
</dbReference>
<dbReference type="NCBIfam" id="TIGR01951">
    <property type="entry name" value="nusB"/>
    <property type="match status" value="1"/>
</dbReference>
<dbReference type="NCBIfam" id="NF001223">
    <property type="entry name" value="PRK00202.1-1"/>
    <property type="match status" value="1"/>
</dbReference>
<dbReference type="PANTHER" id="PTHR11078:SF3">
    <property type="entry name" value="ANTITERMINATION NUSB DOMAIN-CONTAINING PROTEIN"/>
    <property type="match status" value="1"/>
</dbReference>
<dbReference type="PANTHER" id="PTHR11078">
    <property type="entry name" value="N UTILIZATION SUBSTANCE PROTEIN B-RELATED"/>
    <property type="match status" value="1"/>
</dbReference>
<dbReference type="Pfam" id="PF01029">
    <property type="entry name" value="NusB"/>
    <property type="match status" value="1"/>
</dbReference>
<dbReference type="SUPFAM" id="SSF48013">
    <property type="entry name" value="NusB-like"/>
    <property type="match status" value="1"/>
</dbReference>
<reference key="1">
    <citation type="journal article" date="2008" name="Chem. Biol. Interact.">
        <title>Extending the Bacillus cereus group genomics to putative food-borne pathogens of different toxicity.</title>
        <authorList>
            <person name="Lapidus A."/>
            <person name="Goltsman E."/>
            <person name="Auger S."/>
            <person name="Galleron N."/>
            <person name="Segurens B."/>
            <person name="Dossat C."/>
            <person name="Land M.L."/>
            <person name="Broussolle V."/>
            <person name="Brillard J."/>
            <person name="Guinebretiere M.-H."/>
            <person name="Sanchis V."/>
            <person name="Nguen-the C."/>
            <person name="Lereclus D."/>
            <person name="Richardson P."/>
            <person name="Wincker P."/>
            <person name="Weissenbach J."/>
            <person name="Ehrlich S.D."/>
            <person name="Sorokin A."/>
        </authorList>
    </citation>
    <scope>NUCLEOTIDE SEQUENCE [LARGE SCALE GENOMIC DNA]</scope>
    <source>
        <strain>KBAB4</strain>
    </source>
</reference>
<feature type="chain" id="PRO_1000092526" description="Transcription antitermination protein NusB">
    <location>
        <begin position="1"/>
        <end position="130"/>
    </location>
</feature>
<organism>
    <name type="scientific">Bacillus mycoides (strain KBAB4)</name>
    <name type="common">Bacillus weihenstephanensis</name>
    <dbReference type="NCBI Taxonomy" id="315730"/>
    <lineage>
        <taxon>Bacteria</taxon>
        <taxon>Bacillati</taxon>
        <taxon>Bacillota</taxon>
        <taxon>Bacilli</taxon>
        <taxon>Bacillales</taxon>
        <taxon>Bacillaceae</taxon>
        <taxon>Bacillus</taxon>
        <taxon>Bacillus cereus group</taxon>
    </lineage>
</organism>
<accession>A9VGW4</accession>
<name>NUSB_BACMK</name>